<comment type="function">
    <text evidence="1">Forms a proton-selective ion channel that is necessary for the efficient release of the viral genome during virus entry. After attaching to the cell surface, the virion enters the cell by endocytosis. Acidification of the endosome triggers M2 ion channel activity. The influx of protons into virion interior is believed to disrupt interactions between the viral ribonucleoprotein (RNP), matrix protein 1 (M1), and lipid bilayers, thereby freeing the viral genome from interaction with viral proteins and enabling RNA segments to migrate to the host cell nucleus, where influenza virus RNA transcription and replication occur. Also plays a role in viral proteins secretory pathway. Elevates the intravesicular pH of normally acidic compartments, such as trans-Golgi network, preventing newly formed hemagglutinin from premature switching to the fusion-active conformation.</text>
</comment>
<comment type="activity regulation">
    <text>The M2 protein from most influenza A strains is inhibited by amantadine and rimantadine, resulting in viral uncoating incapacity. Emergence of amantadine-resistant variants is usually rapid.</text>
</comment>
<comment type="subunit">
    <text evidence="1">Homotetramer; composed of two disulfide-linked dimers held together by non-covalent interactions. May interact with matrix protein 1.</text>
</comment>
<comment type="subcellular location">
    <subcellularLocation>
        <location evidence="1">Virion membrane</location>
    </subcellularLocation>
    <subcellularLocation>
        <location evidence="1">Host apical cell membrane</location>
        <topology evidence="1">Single-pass type III membrane protein</topology>
    </subcellularLocation>
    <text evidence="1">Abundantly expressed at the apical plasma membrane in infected polarized epithelial cells, in close proximity to budding and assembled virions. Minor component of virions (only 16-20 molecules/virion).</text>
</comment>
<comment type="alternative products">
    <event type="alternative splicing"/>
    <isoform>
        <id>Q04261-1</id>
        <name>M2</name>
        <sequence type="displayed"/>
    </isoform>
    <isoform>
        <id>Q04260-1</id>
        <name>M1</name>
        <sequence type="external"/>
    </isoform>
    <text>Only the first 9 residues are shared by the 2 isoforms.</text>
</comment>
<comment type="domain">
    <text evidence="1">Cytoplasmic tail plays an important role in virion assembly and morphogenesis.</text>
</comment>
<comment type="miscellaneous">
    <text evidence="1">When the channel is activated, one or more imidazole moieties of His-37 probably become bi-protonated.</text>
</comment>
<comment type="similarity">
    <text evidence="1">Belongs to the influenza viruses matrix protein M2 family.</text>
</comment>
<reference key="1">
    <citation type="submission" date="1991-06" db="EMBL/GenBank/DDBJ databases">
        <title>Emergence of a new influenza A virus in horses from avian sources.</title>
        <authorList>
            <person name="Guo Y."/>
            <person name="Wang M.G."/>
            <person name="Kawaoka Y."/>
            <person name="Gorman O.T."/>
            <person name="Ito T."/>
            <person name="Webster R.G."/>
        </authorList>
    </citation>
    <scope>NUCLEOTIDE SEQUENCE [GENOMIC RNA]</scope>
</reference>
<organismHost>
    <name type="scientific">Aves</name>
    <dbReference type="NCBI Taxonomy" id="8782"/>
</organismHost>
<organismHost>
    <name type="scientific">Equus caballus</name>
    <name type="common">Horse</name>
    <dbReference type="NCBI Taxonomy" id="9796"/>
</organismHost>
<feature type="chain" id="PRO_0000326390" description="Matrix protein 2">
    <location>
        <begin position="1"/>
        <end position="97"/>
    </location>
</feature>
<feature type="topological domain" description="Virion surface" evidence="1">
    <location>
        <begin position="1"/>
        <end position="22"/>
    </location>
</feature>
<feature type="transmembrane region" description="Helical; Signal-anchor for type III membrane protein" evidence="1">
    <location>
        <begin position="23"/>
        <end position="43"/>
    </location>
</feature>
<feature type="topological domain" description="Intravirion" evidence="1">
    <location>
        <begin position="44"/>
        <end position="97"/>
    </location>
</feature>
<feature type="region of interest" description="Disordered" evidence="2">
    <location>
        <begin position="60"/>
        <end position="81"/>
    </location>
</feature>
<feature type="site" description="Essential for channel activity, possibly by being protonated during channel activation, and by forming the channel gate and the selective filter" evidence="1">
    <location>
        <position position="37"/>
    </location>
</feature>
<feature type="site" description="Seems to be involved in pH gating" evidence="1">
    <location>
        <position position="41"/>
    </location>
</feature>
<feature type="modified residue" description="Phosphoserine; by host" evidence="1">
    <location>
        <position position="64"/>
    </location>
</feature>
<feature type="lipid moiety-binding region" description="S-palmitoyl cysteine; by host" evidence="1">
    <location>
        <position position="50"/>
    </location>
</feature>
<feature type="disulfide bond" description="Interchain (with C-17)" evidence="1">
    <location>
        <position position="17"/>
    </location>
</feature>
<feature type="disulfide bond" description="Interchain (with C-19)" evidence="1">
    <location>
        <position position="19"/>
    </location>
</feature>
<gene>
    <name evidence="1" type="primary">M</name>
</gene>
<sequence>MSLLTEVETPTRNGWECKCDDSSDPLVIAASIIGILHLILWILDRLSFKCIYRRLKYGLKRGPSTEGVPESMREEYQQEQQNAVDVDDGHFVNIELE</sequence>
<evidence type="ECO:0000255" key="1">
    <source>
        <dbReference type="HAMAP-Rule" id="MF_04069"/>
    </source>
</evidence>
<evidence type="ECO:0000256" key="2">
    <source>
        <dbReference type="SAM" id="MobiDB-lite"/>
    </source>
</evidence>
<accession>Q04261</accession>
<name>M2_I89A7</name>
<dbReference type="EMBL" id="M65019">
    <property type="protein sequence ID" value="AAA43253.1"/>
    <property type="molecule type" value="Genomic_RNA"/>
</dbReference>
<dbReference type="SMR" id="Q04261"/>
<dbReference type="Proteomes" id="UP000130281">
    <property type="component" value="Genome"/>
</dbReference>
<dbReference type="GO" id="GO:0020002">
    <property type="term" value="C:host cell plasma membrane"/>
    <property type="evidence" value="ECO:0007669"/>
    <property type="project" value="UniProtKB-SubCell"/>
</dbReference>
<dbReference type="GO" id="GO:0016020">
    <property type="term" value="C:membrane"/>
    <property type="evidence" value="ECO:0007669"/>
    <property type="project" value="UniProtKB-UniRule"/>
</dbReference>
<dbReference type="GO" id="GO:0055036">
    <property type="term" value="C:virion membrane"/>
    <property type="evidence" value="ECO:0007669"/>
    <property type="project" value="UniProtKB-SubCell"/>
</dbReference>
<dbReference type="GO" id="GO:0005216">
    <property type="term" value="F:monoatomic ion channel activity"/>
    <property type="evidence" value="ECO:0007669"/>
    <property type="project" value="UniProtKB-UniRule"/>
</dbReference>
<dbReference type="GO" id="GO:0015078">
    <property type="term" value="F:proton transmembrane transporter activity"/>
    <property type="evidence" value="ECO:0007669"/>
    <property type="project" value="UniProtKB-UniRule"/>
</dbReference>
<dbReference type="GO" id="GO:0051259">
    <property type="term" value="P:protein complex oligomerization"/>
    <property type="evidence" value="ECO:0007669"/>
    <property type="project" value="UniProtKB-UniRule"/>
</dbReference>
<dbReference type="GO" id="GO:0044694">
    <property type="term" value="P:symbiont genome entry into host cell via pore formation in plasma membrane"/>
    <property type="evidence" value="ECO:0007669"/>
    <property type="project" value="UniProtKB-UniRule"/>
</dbReference>
<dbReference type="GO" id="GO:0140321">
    <property type="term" value="P:symbiont-mediated suppression of host autophagy"/>
    <property type="evidence" value="ECO:0007669"/>
    <property type="project" value="UniProtKB-KW"/>
</dbReference>
<dbReference type="Gene3D" id="6.10.250.1640">
    <property type="match status" value="1"/>
</dbReference>
<dbReference type="HAMAP" id="MF_04069">
    <property type="entry name" value="INFV_M2"/>
    <property type="match status" value="1"/>
</dbReference>
<dbReference type="InterPro" id="IPR002089">
    <property type="entry name" value="Flu_M2"/>
</dbReference>
<dbReference type="Pfam" id="PF00599">
    <property type="entry name" value="Flu_M2"/>
    <property type="match status" value="1"/>
</dbReference>
<keyword id="KW-0025">Alternative splicing</keyword>
<keyword id="KW-1015">Disulfide bond</keyword>
<keyword id="KW-1032">Host cell membrane</keyword>
<keyword id="KW-1043">Host membrane</keyword>
<keyword id="KW-0945">Host-virus interaction</keyword>
<keyword id="KW-0375">Hydrogen ion transport</keyword>
<keyword id="KW-1083">Inhibition of host autophagy by virus</keyword>
<keyword id="KW-0407">Ion channel</keyword>
<keyword id="KW-0406">Ion transport</keyword>
<keyword id="KW-0449">Lipoprotein</keyword>
<keyword id="KW-0472">Membrane</keyword>
<keyword id="KW-0564">Palmitate</keyword>
<keyword id="KW-0597">Phosphoprotein</keyword>
<keyword id="KW-0735">Signal-anchor</keyword>
<keyword id="KW-0812">Transmembrane</keyword>
<keyword id="KW-1133">Transmembrane helix</keyword>
<keyword id="KW-0813">Transport</keyword>
<keyword id="KW-1182">Viral ion channel</keyword>
<keyword id="KW-0946">Virion</keyword>
<protein>
    <recommendedName>
        <fullName evidence="1">Matrix protein 2</fullName>
    </recommendedName>
    <alternativeName>
        <fullName evidence="1">Proton channel protein M2</fullName>
    </alternativeName>
</protein>
<proteinExistence type="inferred from homology"/>
<organism>
    <name type="scientific">Influenza A virus (strain A/Equine/Jillin/1/1989 H3N8)</name>
    <dbReference type="NCBI Taxonomy" id="385585"/>
    <lineage>
        <taxon>Viruses</taxon>
        <taxon>Riboviria</taxon>
        <taxon>Orthornavirae</taxon>
        <taxon>Negarnaviricota</taxon>
        <taxon>Polyploviricotina</taxon>
        <taxon>Insthoviricetes</taxon>
        <taxon>Articulavirales</taxon>
        <taxon>Orthomyxoviridae</taxon>
        <taxon>Alphainfluenzavirus</taxon>
        <taxon>Alphainfluenzavirus influenzae</taxon>
        <taxon>Influenza A virus</taxon>
    </lineage>
</organism>